<organism>
    <name type="scientific">Bacillus cereus (strain B4264)</name>
    <dbReference type="NCBI Taxonomy" id="405532"/>
    <lineage>
        <taxon>Bacteria</taxon>
        <taxon>Bacillati</taxon>
        <taxon>Bacillota</taxon>
        <taxon>Bacilli</taxon>
        <taxon>Bacillales</taxon>
        <taxon>Bacillaceae</taxon>
        <taxon>Bacillus</taxon>
        <taxon>Bacillus cereus group</taxon>
    </lineage>
</organism>
<comment type="function">
    <text evidence="1">Specifically methylates position 2 of adenine 2503 in 23S rRNA and position 2 of adenine 37 in tRNAs.</text>
</comment>
<comment type="catalytic activity">
    <reaction evidence="1">
        <text>adenosine(2503) in 23S rRNA + 2 reduced [2Fe-2S]-[ferredoxin] + 2 S-adenosyl-L-methionine = 2-methyladenosine(2503) in 23S rRNA + 5'-deoxyadenosine + L-methionine + 2 oxidized [2Fe-2S]-[ferredoxin] + S-adenosyl-L-homocysteine</text>
        <dbReference type="Rhea" id="RHEA:42916"/>
        <dbReference type="Rhea" id="RHEA-COMP:10000"/>
        <dbReference type="Rhea" id="RHEA-COMP:10001"/>
        <dbReference type="Rhea" id="RHEA-COMP:10152"/>
        <dbReference type="Rhea" id="RHEA-COMP:10282"/>
        <dbReference type="ChEBI" id="CHEBI:17319"/>
        <dbReference type="ChEBI" id="CHEBI:33737"/>
        <dbReference type="ChEBI" id="CHEBI:33738"/>
        <dbReference type="ChEBI" id="CHEBI:57844"/>
        <dbReference type="ChEBI" id="CHEBI:57856"/>
        <dbReference type="ChEBI" id="CHEBI:59789"/>
        <dbReference type="ChEBI" id="CHEBI:74411"/>
        <dbReference type="ChEBI" id="CHEBI:74497"/>
        <dbReference type="EC" id="2.1.1.192"/>
    </reaction>
</comment>
<comment type="catalytic activity">
    <reaction evidence="1">
        <text>adenosine(37) in tRNA + 2 reduced [2Fe-2S]-[ferredoxin] + 2 S-adenosyl-L-methionine = 2-methyladenosine(37) in tRNA + 5'-deoxyadenosine + L-methionine + 2 oxidized [2Fe-2S]-[ferredoxin] + S-adenosyl-L-homocysteine</text>
        <dbReference type="Rhea" id="RHEA:43332"/>
        <dbReference type="Rhea" id="RHEA-COMP:10000"/>
        <dbReference type="Rhea" id="RHEA-COMP:10001"/>
        <dbReference type="Rhea" id="RHEA-COMP:10162"/>
        <dbReference type="Rhea" id="RHEA-COMP:10485"/>
        <dbReference type="ChEBI" id="CHEBI:17319"/>
        <dbReference type="ChEBI" id="CHEBI:33737"/>
        <dbReference type="ChEBI" id="CHEBI:33738"/>
        <dbReference type="ChEBI" id="CHEBI:57844"/>
        <dbReference type="ChEBI" id="CHEBI:57856"/>
        <dbReference type="ChEBI" id="CHEBI:59789"/>
        <dbReference type="ChEBI" id="CHEBI:74411"/>
        <dbReference type="ChEBI" id="CHEBI:74497"/>
        <dbReference type="EC" id="2.1.1.192"/>
    </reaction>
</comment>
<comment type="cofactor">
    <cofactor evidence="1">
        <name>[4Fe-4S] cluster</name>
        <dbReference type="ChEBI" id="CHEBI:49883"/>
    </cofactor>
    <text evidence="1">Binds 1 [4Fe-4S] cluster. The cluster is coordinated with 3 cysteines and an exchangeable S-adenosyl-L-methionine.</text>
</comment>
<comment type="subcellular location">
    <subcellularLocation>
        <location evidence="1">Cytoplasm</location>
    </subcellularLocation>
</comment>
<comment type="miscellaneous">
    <text evidence="1">Reaction proceeds by a ping-pong mechanism involving intermediate methylation of a conserved cysteine residue.</text>
</comment>
<comment type="similarity">
    <text evidence="1">Belongs to the radical SAM superfamily. RlmN family.</text>
</comment>
<accession>B7HDY7</accession>
<name>RLMN_BACC4</name>
<gene>
    <name evidence="1" type="primary">rlmN</name>
    <name type="ordered locus">BCB4264_A3963</name>
</gene>
<feature type="chain" id="PRO_1000188550" description="Probable dual-specificity RNA methyltransferase RlmN">
    <location>
        <begin position="1"/>
        <end position="362"/>
    </location>
</feature>
<feature type="domain" description="Radical SAM core" evidence="2">
    <location>
        <begin position="111"/>
        <end position="344"/>
    </location>
</feature>
<feature type="active site" description="Proton acceptor" evidence="1">
    <location>
        <position position="105"/>
    </location>
</feature>
<feature type="active site" description="S-methylcysteine intermediate" evidence="1">
    <location>
        <position position="349"/>
    </location>
</feature>
<feature type="binding site" evidence="1">
    <location>
        <position position="125"/>
    </location>
    <ligand>
        <name>[4Fe-4S] cluster</name>
        <dbReference type="ChEBI" id="CHEBI:49883"/>
        <note>4Fe-4S-S-AdoMet</note>
    </ligand>
</feature>
<feature type="binding site" evidence="1">
    <location>
        <position position="129"/>
    </location>
    <ligand>
        <name>[4Fe-4S] cluster</name>
        <dbReference type="ChEBI" id="CHEBI:49883"/>
        <note>4Fe-4S-S-AdoMet</note>
    </ligand>
</feature>
<feature type="binding site" evidence="1">
    <location>
        <position position="132"/>
    </location>
    <ligand>
        <name>[4Fe-4S] cluster</name>
        <dbReference type="ChEBI" id="CHEBI:49883"/>
        <note>4Fe-4S-S-AdoMet</note>
    </ligand>
</feature>
<feature type="binding site" evidence="1">
    <location>
        <begin position="175"/>
        <end position="176"/>
    </location>
    <ligand>
        <name>S-adenosyl-L-methionine</name>
        <dbReference type="ChEBI" id="CHEBI:59789"/>
    </ligand>
</feature>
<feature type="binding site" evidence="1">
    <location>
        <position position="207"/>
    </location>
    <ligand>
        <name>S-adenosyl-L-methionine</name>
        <dbReference type="ChEBI" id="CHEBI:59789"/>
    </ligand>
</feature>
<feature type="binding site" evidence="1">
    <location>
        <begin position="230"/>
        <end position="232"/>
    </location>
    <ligand>
        <name>S-adenosyl-L-methionine</name>
        <dbReference type="ChEBI" id="CHEBI:59789"/>
    </ligand>
</feature>
<feature type="binding site" evidence="1">
    <location>
        <position position="306"/>
    </location>
    <ligand>
        <name>S-adenosyl-L-methionine</name>
        <dbReference type="ChEBI" id="CHEBI:59789"/>
    </ligand>
</feature>
<feature type="disulfide bond" description="(transient)" evidence="1">
    <location>
        <begin position="118"/>
        <end position="349"/>
    </location>
</feature>
<dbReference type="EC" id="2.1.1.192" evidence="1"/>
<dbReference type="EMBL" id="CP001176">
    <property type="protein sequence ID" value="ACK62514.1"/>
    <property type="molecule type" value="Genomic_DNA"/>
</dbReference>
<dbReference type="RefSeq" id="WP_000450537.1">
    <property type="nucleotide sequence ID" value="NC_011725.1"/>
</dbReference>
<dbReference type="SMR" id="B7HDY7"/>
<dbReference type="KEGG" id="bcb:BCB4264_A3963"/>
<dbReference type="HOGENOM" id="CLU_029101_0_1_9"/>
<dbReference type="Proteomes" id="UP000007096">
    <property type="component" value="Chromosome"/>
</dbReference>
<dbReference type="GO" id="GO:0005737">
    <property type="term" value="C:cytoplasm"/>
    <property type="evidence" value="ECO:0007669"/>
    <property type="project" value="UniProtKB-SubCell"/>
</dbReference>
<dbReference type="GO" id="GO:0051539">
    <property type="term" value="F:4 iron, 4 sulfur cluster binding"/>
    <property type="evidence" value="ECO:0007669"/>
    <property type="project" value="UniProtKB-UniRule"/>
</dbReference>
<dbReference type="GO" id="GO:0046872">
    <property type="term" value="F:metal ion binding"/>
    <property type="evidence" value="ECO:0007669"/>
    <property type="project" value="UniProtKB-KW"/>
</dbReference>
<dbReference type="GO" id="GO:0070040">
    <property type="term" value="F:rRNA (adenine(2503)-C2-)-methyltransferase activity"/>
    <property type="evidence" value="ECO:0007669"/>
    <property type="project" value="UniProtKB-UniRule"/>
</dbReference>
<dbReference type="GO" id="GO:0019843">
    <property type="term" value="F:rRNA binding"/>
    <property type="evidence" value="ECO:0007669"/>
    <property type="project" value="UniProtKB-UniRule"/>
</dbReference>
<dbReference type="GO" id="GO:0002935">
    <property type="term" value="F:tRNA (adenine(37)-C2)-methyltransferase activity"/>
    <property type="evidence" value="ECO:0007669"/>
    <property type="project" value="UniProtKB-UniRule"/>
</dbReference>
<dbReference type="GO" id="GO:0000049">
    <property type="term" value="F:tRNA binding"/>
    <property type="evidence" value="ECO:0007669"/>
    <property type="project" value="UniProtKB-UniRule"/>
</dbReference>
<dbReference type="GO" id="GO:0070475">
    <property type="term" value="P:rRNA base methylation"/>
    <property type="evidence" value="ECO:0007669"/>
    <property type="project" value="UniProtKB-UniRule"/>
</dbReference>
<dbReference type="GO" id="GO:0030488">
    <property type="term" value="P:tRNA methylation"/>
    <property type="evidence" value="ECO:0007669"/>
    <property type="project" value="UniProtKB-UniRule"/>
</dbReference>
<dbReference type="CDD" id="cd01335">
    <property type="entry name" value="Radical_SAM"/>
    <property type="match status" value="1"/>
</dbReference>
<dbReference type="FunFam" id="1.10.150.530:FF:000002">
    <property type="entry name" value="Probable dual-specificity RNA methyltransferase RlmN"/>
    <property type="match status" value="1"/>
</dbReference>
<dbReference type="FunFam" id="3.20.20.70:FF:000014">
    <property type="entry name" value="Probable dual-specificity RNA methyltransferase RlmN"/>
    <property type="match status" value="1"/>
</dbReference>
<dbReference type="Gene3D" id="1.10.150.530">
    <property type="match status" value="1"/>
</dbReference>
<dbReference type="Gene3D" id="3.20.20.70">
    <property type="entry name" value="Aldolase class I"/>
    <property type="match status" value="1"/>
</dbReference>
<dbReference type="HAMAP" id="MF_01849">
    <property type="entry name" value="RNA_methyltr_RlmN"/>
    <property type="match status" value="1"/>
</dbReference>
<dbReference type="InterPro" id="IPR013785">
    <property type="entry name" value="Aldolase_TIM"/>
</dbReference>
<dbReference type="InterPro" id="IPR040072">
    <property type="entry name" value="Methyltransferase_A"/>
</dbReference>
<dbReference type="InterPro" id="IPR048641">
    <property type="entry name" value="RlmN_N"/>
</dbReference>
<dbReference type="InterPro" id="IPR027492">
    <property type="entry name" value="RNA_MTrfase_RlmN"/>
</dbReference>
<dbReference type="InterPro" id="IPR004383">
    <property type="entry name" value="rRNA_lsu_MTrfase_RlmN/Cfr"/>
</dbReference>
<dbReference type="InterPro" id="IPR007197">
    <property type="entry name" value="rSAM"/>
</dbReference>
<dbReference type="NCBIfam" id="TIGR00048">
    <property type="entry name" value="rRNA_mod_RlmN"/>
    <property type="match status" value="1"/>
</dbReference>
<dbReference type="PANTHER" id="PTHR30544">
    <property type="entry name" value="23S RRNA METHYLTRANSFERASE"/>
    <property type="match status" value="1"/>
</dbReference>
<dbReference type="PANTHER" id="PTHR30544:SF5">
    <property type="entry name" value="RADICAL SAM CORE DOMAIN-CONTAINING PROTEIN"/>
    <property type="match status" value="1"/>
</dbReference>
<dbReference type="Pfam" id="PF04055">
    <property type="entry name" value="Radical_SAM"/>
    <property type="match status" value="1"/>
</dbReference>
<dbReference type="Pfam" id="PF21016">
    <property type="entry name" value="RlmN_N"/>
    <property type="match status" value="1"/>
</dbReference>
<dbReference type="PIRSF" id="PIRSF006004">
    <property type="entry name" value="CHP00048"/>
    <property type="match status" value="1"/>
</dbReference>
<dbReference type="SFLD" id="SFLDF00275">
    <property type="entry name" value="adenosine_C2_methyltransferase"/>
    <property type="match status" value="1"/>
</dbReference>
<dbReference type="SFLD" id="SFLDS00029">
    <property type="entry name" value="Radical_SAM"/>
    <property type="match status" value="1"/>
</dbReference>
<dbReference type="SUPFAM" id="SSF102114">
    <property type="entry name" value="Radical SAM enzymes"/>
    <property type="match status" value="1"/>
</dbReference>
<dbReference type="PROSITE" id="PS51918">
    <property type="entry name" value="RADICAL_SAM"/>
    <property type="match status" value="1"/>
</dbReference>
<protein>
    <recommendedName>
        <fullName evidence="1">Probable dual-specificity RNA methyltransferase RlmN</fullName>
        <ecNumber evidence="1">2.1.1.192</ecNumber>
    </recommendedName>
    <alternativeName>
        <fullName evidence="1">23S rRNA (adenine(2503)-C(2))-methyltransferase</fullName>
    </alternativeName>
    <alternativeName>
        <fullName evidence="1">23S rRNA m2A2503 methyltransferase</fullName>
    </alternativeName>
    <alternativeName>
        <fullName evidence="1">Ribosomal RNA large subunit methyltransferase N</fullName>
    </alternativeName>
    <alternativeName>
        <fullName evidence="1">tRNA (adenine(37)-C(2))-methyltransferase</fullName>
    </alternativeName>
    <alternativeName>
        <fullName evidence="1">tRNA m2A37 methyltransferase</fullName>
    </alternativeName>
</protein>
<keyword id="KW-0004">4Fe-4S</keyword>
<keyword id="KW-0963">Cytoplasm</keyword>
<keyword id="KW-1015">Disulfide bond</keyword>
<keyword id="KW-0408">Iron</keyword>
<keyword id="KW-0411">Iron-sulfur</keyword>
<keyword id="KW-0479">Metal-binding</keyword>
<keyword id="KW-0489">Methyltransferase</keyword>
<keyword id="KW-0698">rRNA processing</keyword>
<keyword id="KW-0949">S-adenosyl-L-methionine</keyword>
<keyword id="KW-0808">Transferase</keyword>
<keyword id="KW-0819">tRNA processing</keyword>
<reference key="1">
    <citation type="submission" date="2008-10" db="EMBL/GenBank/DDBJ databases">
        <title>Genome sequence of Bacillus cereus B4264.</title>
        <authorList>
            <person name="Dodson R.J."/>
            <person name="Durkin A.S."/>
            <person name="Rosovitz M.J."/>
            <person name="Rasko D.A."/>
            <person name="Hoffmaster A."/>
            <person name="Ravel J."/>
            <person name="Sutton G."/>
        </authorList>
    </citation>
    <scope>NUCLEOTIDE SEQUENCE [LARGE SCALE GENOMIC DNA]</scope>
    <source>
        <strain>B4264</strain>
    </source>
</reference>
<evidence type="ECO:0000255" key="1">
    <source>
        <dbReference type="HAMAP-Rule" id="MF_01849"/>
    </source>
</evidence>
<evidence type="ECO:0000255" key="2">
    <source>
        <dbReference type="PROSITE-ProRule" id="PRU01266"/>
    </source>
</evidence>
<proteinExistence type="inferred from homology"/>
<sequence>METTVRKQKKNLEMKKPSIYSLQLHEMQDWLKEQGEPKFRAGQIFDWLYKKRVKNYEDMSNLSKGLRDKLSNSFDITTLNTLVKQTSSDGTIKFLFQLYDGYSIETVLMRHEYGNSICVTTQVGCRIGCTFCASTLGGLKRNLEAGEIVAQVVEVQRALDETEERVSSLVVMGIGEPFDNYDNLMGFLRIINHEKGLHIGARHMTVSTSGIIPKIYKFAEEDLQINFAISLHAPNSELRSKLMPINRAYKLPDLMEAIKYYVNRTGRRITFEYGLFGGENDQVEHAEELAALLKGVKCHVNLIPVNYVPERDYVRTPREQIFLFEKTLKDRGVNVTIRREQGHDIDAACGQLRAKERKEETR</sequence>